<proteinExistence type="inferred from homology"/>
<organism>
    <name type="scientific">Salmonella typhi</name>
    <dbReference type="NCBI Taxonomy" id="90370"/>
    <lineage>
        <taxon>Bacteria</taxon>
        <taxon>Pseudomonadati</taxon>
        <taxon>Pseudomonadota</taxon>
        <taxon>Gammaproteobacteria</taxon>
        <taxon>Enterobacterales</taxon>
        <taxon>Enterobacteriaceae</taxon>
        <taxon>Salmonella</taxon>
    </lineage>
</organism>
<name>BTUD_SALTI</name>
<evidence type="ECO:0000255" key="1">
    <source>
        <dbReference type="HAMAP-Rule" id="MF_01005"/>
    </source>
</evidence>
<accession>P63352</accession>
<accession>Q8XGF8</accession>
<sequence>MSQLMQLKDVAESTRLGPLSGEVSAGEILHLVGPNGAGKSTLLARMAGLTSGEGSIRFGGAPLEAWATATLAQHRAYLAQQQNPPFAMPVWHYLTLHQPDKTRTGQLNEVADMLGLGDKLGRSVNQLSGGEWQRVRLAAVVLQIHPDANPVGQLLLLDEPMNSLDVAQQNALDRVLHHLCQAGIAIVMSSHDLNHTLRHAHKAWLLKRGKLIACGRREEVLTPSYLAQAYGLRFRRLDVEGHPMLISAT</sequence>
<keyword id="KW-0067">ATP-binding</keyword>
<keyword id="KW-0997">Cell inner membrane</keyword>
<keyword id="KW-1003">Cell membrane</keyword>
<keyword id="KW-0472">Membrane</keyword>
<keyword id="KW-0547">Nucleotide-binding</keyword>
<keyword id="KW-1278">Translocase</keyword>
<keyword id="KW-0813">Transport</keyword>
<protein>
    <recommendedName>
        <fullName evidence="1">Vitamin B12 import ATP-binding protein BtuD</fullName>
        <ecNumber evidence="1">7.6.2.8</ecNumber>
    </recommendedName>
    <alternativeName>
        <fullName evidence="1">Vitamin B12-transporting ATPase</fullName>
    </alternativeName>
</protein>
<comment type="function">
    <text evidence="1">Part of the ABC transporter complex BtuCDF involved in vitamin B12 import. Responsible for energy coupling to the transport system.</text>
</comment>
<comment type="catalytic activity">
    <reaction evidence="1">
        <text>an R-cob(III)alamin(out) + ATP + H2O = an R-cob(III)alamin(in) + ADP + phosphate + H(+)</text>
        <dbReference type="Rhea" id="RHEA:17873"/>
        <dbReference type="ChEBI" id="CHEBI:15377"/>
        <dbReference type="ChEBI" id="CHEBI:15378"/>
        <dbReference type="ChEBI" id="CHEBI:30616"/>
        <dbReference type="ChEBI" id="CHEBI:43474"/>
        <dbReference type="ChEBI" id="CHEBI:140785"/>
        <dbReference type="ChEBI" id="CHEBI:456216"/>
        <dbReference type="EC" id="7.6.2.8"/>
    </reaction>
</comment>
<comment type="subunit">
    <text evidence="1">The complex is composed of two ATP-binding proteins (BtuD), two transmembrane proteins (BtuC) and a solute-binding protein (BtuF).</text>
</comment>
<comment type="subcellular location">
    <subcellularLocation>
        <location evidence="1">Cell inner membrane</location>
        <topology evidence="1">Peripheral membrane protein</topology>
    </subcellularLocation>
</comment>
<comment type="similarity">
    <text evidence="1">Belongs to the ABC transporter superfamily. Vitamin B12 importer (TC 3.A.1.13.1) family.</text>
</comment>
<dbReference type="EC" id="7.6.2.8" evidence="1"/>
<dbReference type="EMBL" id="AL513382">
    <property type="protein sequence ID" value="CAD02010.1"/>
    <property type="molecule type" value="Genomic_DNA"/>
</dbReference>
<dbReference type="EMBL" id="AE014613">
    <property type="protein sequence ID" value="AAO68878.1"/>
    <property type="molecule type" value="Genomic_DNA"/>
</dbReference>
<dbReference type="RefSeq" id="NP_456169.1">
    <property type="nucleotide sequence ID" value="NC_003198.1"/>
</dbReference>
<dbReference type="RefSeq" id="WP_000080607.1">
    <property type="nucleotide sequence ID" value="NZ_WSUR01000011.1"/>
</dbReference>
<dbReference type="SMR" id="P63352"/>
<dbReference type="STRING" id="220341.gene:17585702"/>
<dbReference type="KEGG" id="stt:t1223"/>
<dbReference type="KEGG" id="sty:STY1768"/>
<dbReference type="PATRIC" id="fig|220341.7.peg.1780"/>
<dbReference type="eggNOG" id="COG4138">
    <property type="taxonomic scope" value="Bacteria"/>
</dbReference>
<dbReference type="HOGENOM" id="CLU_000604_1_11_6"/>
<dbReference type="OMA" id="CAHDLNH"/>
<dbReference type="Proteomes" id="UP000000541">
    <property type="component" value="Chromosome"/>
</dbReference>
<dbReference type="Proteomes" id="UP000002670">
    <property type="component" value="Chromosome"/>
</dbReference>
<dbReference type="GO" id="GO:0005886">
    <property type="term" value="C:plasma membrane"/>
    <property type="evidence" value="ECO:0007669"/>
    <property type="project" value="UniProtKB-SubCell"/>
</dbReference>
<dbReference type="GO" id="GO:0015420">
    <property type="term" value="F:ABC-type vitamin B12 transporter activity"/>
    <property type="evidence" value="ECO:0007669"/>
    <property type="project" value="UniProtKB-UniRule"/>
</dbReference>
<dbReference type="GO" id="GO:0005524">
    <property type="term" value="F:ATP binding"/>
    <property type="evidence" value="ECO:0007669"/>
    <property type="project" value="UniProtKB-KW"/>
</dbReference>
<dbReference type="GO" id="GO:0016887">
    <property type="term" value="F:ATP hydrolysis activity"/>
    <property type="evidence" value="ECO:0007669"/>
    <property type="project" value="InterPro"/>
</dbReference>
<dbReference type="CDD" id="cd03214">
    <property type="entry name" value="ABC_Iron-Siderophores_B12_Hemin"/>
    <property type="match status" value="1"/>
</dbReference>
<dbReference type="FunFam" id="3.40.50.300:FF:000462">
    <property type="entry name" value="Vitamin B12 import ATP-binding protein BtuD"/>
    <property type="match status" value="1"/>
</dbReference>
<dbReference type="Gene3D" id="3.40.50.300">
    <property type="entry name" value="P-loop containing nucleotide triphosphate hydrolases"/>
    <property type="match status" value="1"/>
</dbReference>
<dbReference type="HAMAP" id="MF_01005">
    <property type="entry name" value="BtuD"/>
    <property type="match status" value="1"/>
</dbReference>
<dbReference type="InterPro" id="IPR003593">
    <property type="entry name" value="AAA+_ATPase"/>
</dbReference>
<dbReference type="InterPro" id="IPR003439">
    <property type="entry name" value="ABC_transporter-like_ATP-bd"/>
</dbReference>
<dbReference type="InterPro" id="IPR017871">
    <property type="entry name" value="ABC_transporter-like_CS"/>
</dbReference>
<dbReference type="InterPro" id="IPR023693">
    <property type="entry name" value="ABC_transptr_BtuD"/>
</dbReference>
<dbReference type="InterPro" id="IPR050153">
    <property type="entry name" value="Metal_Ion_Import_ABC"/>
</dbReference>
<dbReference type="InterPro" id="IPR027417">
    <property type="entry name" value="P-loop_NTPase"/>
</dbReference>
<dbReference type="NCBIfam" id="NF002981">
    <property type="entry name" value="PRK03695.1"/>
    <property type="match status" value="1"/>
</dbReference>
<dbReference type="PANTHER" id="PTHR42734">
    <property type="entry name" value="METAL TRANSPORT SYSTEM ATP-BINDING PROTEIN TM_0124-RELATED"/>
    <property type="match status" value="1"/>
</dbReference>
<dbReference type="PANTHER" id="PTHR42734:SF18">
    <property type="entry name" value="VITAMIN B12 IMPORT ATP-BINDING PROTEIN BTUD"/>
    <property type="match status" value="1"/>
</dbReference>
<dbReference type="Pfam" id="PF00005">
    <property type="entry name" value="ABC_tran"/>
    <property type="match status" value="1"/>
</dbReference>
<dbReference type="SMART" id="SM00382">
    <property type="entry name" value="AAA"/>
    <property type="match status" value="1"/>
</dbReference>
<dbReference type="SUPFAM" id="SSF52540">
    <property type="entry name" value="P-loop containing nucleoside triphosphate hydrolases"/>
    <property type="match status" value="1"/>
</dbReference>
<dbReference type="PROSITE" id="PS00211">
    <property type="entry name" value="ABC_TRANSPORTER_1"/>
    <property type="match status" value="1"/>
</dbReference>
<dbReference type="PROSITE" id="PS50893">
    <property type="entry name" value="ABC_TRANSPORTER_2"/>
    <property type="match status" value="1"/>
</dbReference>
<gene>
    <name evidence="1" type="primary">btuD</name>
    <name type="ordered locus">STY1768</name>
    <name type="ordered locus">t1223</name>
</gene>
<reference key="1">
    <citation type="journal article" date="2001" name="Nature">
        <title>Complete genome sequence of a multiple drug resistant Salmonella enterica serovar Typhi CT18.</title>
        <authorList>
            <person name="Parkhill J."/>
            <person name="Dougan G."/>
            <person name="James K.D."/>
            <person name="Thomson N.R."/>
            <person name="Pickard D."/>
            <person name="Wain J."/>
            <person name="Churcher C.M."/>
            <person name="Mungall K.L."/>
            <person name="Bentley S.D."/>
            <person name="Holden M.T.G."/>
            <person name="Sebaihia M."/>
            <person name="Baker S."/>
            <person name="Basham D."/>
            <person name="Brooks K."/>
            <person name="Chillingworth T."/>
            <person name="Connerton P."/>
            <person name="Cronin A."/>
            <person name="Davis P."/>
            <person name="Davies R.M."/>
            <person name="Dowd L."/>
            <person name="White N."/>
            <person name="Farrar J."/>
            <person name="Feltwell T."/>
            <person name="Hamlin N."/>
            <person name="Haque A."/>
            <person name="Hien T.T."/>
            <person name="Holroyd S."/>
            <person name="Jagels K."/>
            <person name="Krogh A."/>
            <person name="Larsen T.S."/>
            <person name="Leather S."/>
            <person name="Moule S."/>
            <person name="O'Gaora P."/>
            <person name="Parry C."/>
            <person name="Quail M.A."/>
            <person name="Rutherford K.M."/>
            <person name="Simmonds M."/>
            <person name="Skelton J."/>
            <person name="Stevens K."/>
            <person name="Whitehead S."/>
            <person name="Barrell B.G."/>
        </authorList>
    </citation>
    <scope>NUCLEOTIDE SEQUENCE [LARGE SCALE GENOMIC DNA]</scope>
    <source>
        <strain>CT18</strain>
    </source>
</reference>
<reference key="2">
    <citation type="journal article" date="2003" name="J. Bacteriol.">
        <title>Comparative genomics of Salmonella enterica serovar Typhi strains Ty2 and CT18.</title>
        <authorList>
            <person name="Deng W."/>
            <person name="Liou S.-R."/>
            <person name="Plunkett G. III"/>
            <person name="Mayhew G.F."/>
            <person name="Rose D.J."/>
            <person name="Burland V."/>
            <person name="Kodoyianni V."/>
            <person name="Schwartz D.C."/>
            <person name="Blattner F.R."/>
        </authorList>
    </citation>
    <scope>NUCLEOTIDE SEQUENCE [LARGE SCALE GENOMIC DNA]</scope>
    <source>
        <strain>ATCC 700931 / Ty2</strain>
    </source>
</reference>
<feature type="chain" id="PRO_0000091958" description="Vitamin B12 import ATP-binding protein BtuD">
    <location>
        <begin position="1"/>
        <end position="249"/>
    </location>
</feature>
<feature type="domain" description="ABC transporter" evidence="1">
    <location>
        <begin position="1"/>
        <end position="233"/>
    </location>
</feature>
<feature type="binding site" evidence="1">
    <location>
        <begin position="33"/>
        <end position="40"/>
    </location>
    <ligand>
        <name>ATP</name>
        <dbReference type="ChEBI" id="CHEBI:30616"/>
    </ligand>
</feature>